<organism>
    <name type="scientific">Rickettsia prowazekii (strain Madrid E)</name>
    <dbReference type="NCBI Taxonomy" id="272947"/>
    <lineage>
        <taxon>Bacteria</taxon>
        <taxon>Pseudomonadati</taxon>
        <taxon>Pseudomonadota</taxon>
        <taxon>Alphaproteobacteria</taxon>
        <taxon>Rickettsiales</taxon>
        <taxon>Rickettsiaceae</taxon>
        <taxon>Rickettsieae</taxon>
        <taxon>Rickettsia</taxon>
        <taxon>typhus group</taxon>
    </lineage>
</organism>
<reference key="1">
    <citation type="journal article" date="1998" name="Nature">
        <title>The genome sequence of Rickettsia prowazekii and the origin of mitochondria.</title>
        <authorList>
            <person name="Andersson S.G.E."/>
            <person name="Zomorodipour A."/>
            <person name="Andersson J.O."/>
            <person name="Sicheritz-Ponten T."/>
            <person name="Alsmark U.C.M."/>
            <person name="Podowski R.M."/>
            <person name="Naeslund A.K."/>
            <person name="Eriksson A.-S."/>
            <person name="Winkler H.H."/>
            <person name="Kurland C.G."/>
        </authorList>
    </citation>
    <scope>NUCLEOTIDE SEQUENCE [LARGE SCALE GENOMIC DNA]</scope>
    <source>
        <strain>Madrid E</strain>
    </source>
</reference>
<name>HEM6_RICPR</name>
<comment type="function">
    <text evidence="1">Involved in the heme biosynthesis. Catalyzes the aerobic oxidative decarboxylation of propionate groups of rings A and B of coproporphyrinogen-III to yield the vinyl groups in protoporphyrinogen-IX.</text>
</comment>
<comment type="catalytic activity">
    <reaction evidence="1">
        <text>coproporphyrinogen III + O2 + 2 H(+) = protoporphyrinogen IX + 2 CO2 + 2 H2O</text>
        <dbReference type="Rhea" id="RHEA:18257"/>
        <dbReference type="ChEBI" id="CHEBI:15377"/>
        <dbReference type="ChEBI" id="CHEBI:15378"/>
        <dbReference type="ChEBI" id="CHEBI:15379"/>
        <dbReference type="ChEBI" id="CHEBI:16526"/>
        <dbReference type="ChEBI" id="CHEBI:57307"/>
        <dbReference type="ChEBI" id="CHEBI:57309"/>
        <dbReference type="EC" id="1.3.3.3"/>
    </reaction>
</comment>
<comment type="cofactor">
    <cofactor evidence="1">
        <name>a divalent metal cation</name>
        <dbReference type="ChEBI" id="CHEBI:60240"/>
    </cofactor>
</comment>
<comment type="pathway">
    <text evidence="1">Porphyrin-containing compound metabolism; protoporphyrin-IX biosynthesis; protoporphyrinogen-IX from coproporphyrinogen-III (O2 route): step 1/1.</text>
</comment>
<comment type="subunit">
    <text evidence="1">Homodimer.</text>
</comment>
<comment type="subcellular location">
    <subcellularLocation>
        <location evidence="1">Cytoplasm</location>
    </subcellularLocation>
</comment>
<comment type="similarity">
    <text evidence="1">Belongs to the aerobic coproporphyrinogen-III oxidase family.</text>
</comment>
<evidence type="ECO:0000255" key="1">
    <source>
        <dbReference type="HAMAP-Rule" id="MF_00333"/>
    </source>
</evidence>
<sequence length="279" mass="32197">MNTENKEITSNWFTNLRDLLCKEFEKIEEKYAQIKGLKPAKFVRTSWKRNGGGCGIMSLMKGEVFEKVGVNISTVFGEFSQEFRSEILGAELDGKFFATGISVVAHLKSPLIPAMHFNTRYIETSKNWFGGGGDLTPFYPEENETAKFHTAFKEACDKYDSSYYPKFKKQCDEYFYLRHRKEPRGVGGIFYDYLNSGNFEQDFAFTKDIGKALLSVYPEIVRSKLFLPWTAEQKEYQLIRRGRYVEFNLLYDRGTKFGLMTDGNVEAILMSLPPVVKFN</sequence>
<dbReference type="EC" id="1.3.3.3" evidence="1"/>
<dbReference type="EMBL" id="AJ235273">
    <property type="protein sequence ID" value="CAA15304.1"/>
    <property type="molecule type" value="Genomic_DNA"/>
</dbReference>
<dbReference type="PIR" id="H71650">
    <property type="entry name" value="H71650"/>
</dbReference>
<dbReference type="RefSeq" id="NP_221228.1">
    <property type="nucleotide sequence ID" value="NC_000963.1"/>
</dbReference>
<dbReference type="RefSeq" id="WP_004596721.1">
    <property type="nucleotide sequence ID" value="NC_000963.1"/>
</dbReference>
<dbReference type="SMR" id="Q9ZC86"/>
<dbReference type="STRING" id="272947.gene:17555951"/>
<dbReference type="EnsemblBacteria" id="CAA15304">
    <property type="protein sequence ID" value="CAA15304"/>
    <property type="gene ID" value="CAA15304"/>
</dbReference>
<dbReference type="GeneID" id="57570005"/>
<dbReference type="KEGG" id="rpr:RP882"/>
<dbReference type="PATRIC" id="fig|272947.5.peg.922"/>
<dbReference type="eggNOG" id="COG0408">
    <property type="taxonomic scope" value="Bacteria"/>
</dbReference>
<dbReference type="HOGENOM" id="CLU_026169_0_1_5"/>
<dbReference type="OrthoDB" id="9777553at2"/>
<dbReference type="UniPathway" id="UPA00251">
    <property type="reaction ID" value="UER00322"/>
</dbReference>
<dbReference type="Proteomes" id="UP000002480">
    <property type="component" value="Chromosome"/>
</dbReference>
<dbReference type="GO" id="GO:0005737">
    <property type="term" value="C:cytoplasm"/>
    <property type="evidence" value="ECO:0007669"/>
    <property type="project" value="UniProtKB-SubCell"/>
</dbReference>
<dbReference type="GO" id="GO:0004109">
    <property type="term" value="F:coproporphyrinogen oxidase activity"/>
    <property type="evidence" value="ECO:0007669"/>
    <property type="project" value="UniProtKB-UniRule"/>
</dbReference>
<dbReference type="GO" id="GO:0046872">
    <property type="term" value="F:metal ion binding"/>
    <property type="evidence" value="ECO:0007669"/>
    <property type="project" value="UniProtKB-KW"/>
</dbReference>
<dbReference type="GO" id="GO:0042803">
    <property type="term" value="F:protein homodimerization activity"/>
    <property type="evidence" value="ECO:0000250"/>
    <property type="project" value="UniProtKB"/>
</dbReference>
<dbReference type="GO" id="GO:0006782">
    <property type="term" value="P:protoporphyrinogen IX biosynthetic process"/>
    <property type="evidence" value="ECO:0007669"/>
    <property type="project" value="UniProtKB-UniRule"/>
</dbReference>
<dbReference type="FunFam" id="3.40.1500.10:FF:000005">
    <property type="entry name" value="Oxygen-dependent coproporphyrinogen-III oxidase"/>
    <property type="match status" value="1"/>
</dbReference>
<dbReference type="Gene3D" id="3.40.1500.10">
    <property type="entry name" value="Coproporphyrinogen III oxidase, aerobic"/>
    <property type="match status" value="1"/>
</dbReference>
<dbReference type="HAMAP" id="MF_00333">
    <property type="entry name" value="Coprogen_oxidas"/>
    <property type="match status" value="1"/>
</dbReference>
<dbReference type="InterPro" id="IPR001260">
    <property type="entry name" value="Coprogen_oxidase_aer"/>
</dbReference>
<dbReference type="InterPro" id="IPR036406">
    <property type="entry name" value="Coprogen_oxidase_aer_sf"/>
</dbReference>
<dbReference type="InterPro" id="IPR018375">
    <property type="entry name" value="Coprogen_oxidase_CS"/>
</dbReference>
<dbReference type="NCBIfam" id="NF003727">
    <property type="entry name" value="PRK05330.1"/>
    <property type="match status" value="1"/>
</dbReference>
<dbReference type="PANTHER" id="PTHR10755">
    <property type="entry name" value="COPROPORPHYRINOGEN III OXIDASE, MITOCHONDRIAL"/>
    <property type="match status" value="1"/>
</dbReference>
<dbReference type="PANTHER" id="PTHR10755:SF0">
    <property type="entry name" value="OXYGEN-DEPENDENT COPROPORPHYRINOGEN-III OXIDASE, MITOCHONDRIAL"/>
    <property type="match status" value="1"/>
</dbReference>
<dbReference type="Pfam" id="PF01218">
    <property type="entry name" value="Coprogen_oxidas"/>
    <property type="match status" value="1"/>
</dbReference>
<dbReference type="PIRSF" id="PIRSF000166">
    <property type="entry name" value="Coproporphyri_ox"/>
    <property type="match status" value="1"/>
</dbReference>
<dbReference type="PRINTS" id="PR00073">
    <property type="entry name" value="COPRGNOXDASE"/>
</dbReference>
<dbReference type="SUPFAM" id="SSF102886">
    <property type="entry name" value="Coproporphyrinogen III oxidase"/>
    <property type="match status" value="1"/>
</dbReference>
<dbReference type="PROSITE" id="PS01021">
    <property type="entry name" value="COPROGEN_OXIDASE"/>
    <property type="match status" value="1"/>
</dbReference>
<protein>
    <recommendedName>
        <fullName evidence="1">Oxygen-dependent coproporphyrinogen-III oxidase</fullName>
        <shortName evidence="1">CPO</shortName>
        <shortName evidence="1">Coprogen oxidase</shortName>
        <shortName evidence="1">Coproporphyrinogenase</shortName>
        <ecNumber evidence="1">1.3.3.3</ecNumber>
    </recommendedName>
</protein>
<accession>Q9ZC86</accession>
<gene>
    <name evidence="1" type="primary">hemF</name>
    <name type="ordered locus">RP882</name>
</gene>
<proteinExistence type="inferred from homology"/>
<keyword id="KW-0963">Cytoplasm</keyword>
<keyword id="KW-0350">Heme biosynthesis</keyword>
<keyword id="KW-0479">Metal-binding</keyword>
<keyword id="KW-0560">Oxidoreductase</keyword>
<keyword id="KW-0627">Porphyrin biosynthesis</keyword>
<keyword id="KW-1185">Reference proteome</keyword>
<feature type="chain" id="PRO_0000109916" description="Oxygen-dependent coproporphyrinogen-III oxidase">
    <location>
        <begin position="1"/>
        <end position="279"/>
    </location>
</feature>
<feature type="region of interest" description="Important for dimerization" evidence="1">
    <location>
        <begin position="244"/>
        <end position="279"/>
    </location>
</feature>
<feature type="active site" description="Proton donor" evidence="1">
    <location>
        <position position="116"/>
    </location>
</feature>
<feature type="binding site" evidence="1">
    <location>
        <position position="102"/>
    </location>
    <ligand>
        <name>substrate</name>
    </ligand>
</feature>
<feature type="binding site" evidence="1">
    <location>
        <position position="106"/>
    </location>
    <ligand>
        <name>a divalent metal cation</name>
        <dbReference type="ChEBI" id="CHEBI:60240"/>
    </ligand>
</feature>
<feature type="binding site" evidence="1">
    <location>
        <position position="116"/>
    </location>
    <ligand>
        <name>a divalent metal cation</name>
        <dbReference type="ChEBI" id="CHEBI:60240"/>
    </ligand>
</feature>
<feature type="binding site" evidence="1">
    <location>
        <begin position="118"/>
        <end position="120"/>
    </location>
    <ligand>
        <name>substrate</name>
    </ligand>
</feature>
<feature type="binding site" evidence="1">
    <location>
        <position position="149"/>
    </location>
    <ligand>
        <name>a divalent metal cation</name>
        <dbReference type="ChEBI" id="CHEBI:60240"/>
    </ligand>
</feature>
<feature type="binding site" evidence="1">
    <location>
        <position position="179"/>
    </location>
    <ligand>
        <name>a divalent metal cation</name>
        <dbReference type="ChEBI" id="CHEBI:60240"/>
    </ligand>
</feature>
<feature type="site" description="Important for dimerization" evidence="1">
    <location>
        <position position="179"/>
    </location>
</feature>